<keyword id="KW-0446">Lipid-binding</keyword>
<keyword id="KW-1185">Reference proteome</keyword>
<comment type="function">
    <text evidence="1">May bind long-chain fatty acids, such as palmitate, and may play a role in lipid transport or fatty acid metabolism.</text>
</comment>
<evidence type="ECO:0000250" key="1"/>
<evidence type="ECO:0000250" key="2">
    <source>
        <dbReference type="UniProtKB" id="Q9X1H9"/>
    </source>
</evidence>
<evidence type="ECO:0000255" key="3">
    <source>
        <dbReference type="PROSITE-ProRule" id="PRU00815"/>
    </source>
</evidence>
<dbReference type="EMBL" id="AE005176">
    <property type="protein sequence ID" value="AAK05969.1"/>
    <property type="molecule type" value="Genomic_DNA"/>
</dbReference>
<dbReference type="PIR" id="G86858">
    <property type="entry name" value="G86858"/>
</dbReference>
<dbReference type="RefSeq" id="NP_268028.1">
    <property type="nucleotide sequence ID" value="NC_002662.1"/>
</dbReference>
<dbReference type="RefSeq" id="WP_010906175.1">
    <property type="nucleotide sequence ID" value="NC_002662.1"/>
</dbReference>
<dbReference type="SMR" id="Q9CEH0"/>
<dbReference type="PaxDb" id="272623-L123851"/>
<dbReference type="EnsemblBacteria" id="AAK05969">
    <property type="protein sequence ID" value="AAK05969"/>
    <property type="gene ID" value="L123851"/>
</dbReference>
<dbReference type="KEGG" id="lla:L123851"/>
<dbReference type="PATRIC" id="fig|272623.7.peg.2005"/>
<dbReference type="eggNOG" id="COG1307">
    <property type="taxonomic scope" value="Bacteria"/>
</dbReference>
<dbReference type="HOGENOM" id="CLU_048251_4_1_9"/>
<dbReference type="OrthoDB" id="9780660at2"/>
<dbReference type="Proteomes" id="UP000002196">
    <property type="component" value="Chromosome"/>
</dbReference>
<dbReference type="GO" id="GO:0008289">
    <property type="term" value="F:lipid binding"/>
    <property type="evidence" value="ECO:0007669"/>
    <property type="project" value="UniProtKB-KW"/>
</dbReference>
<dbReference type="Gene3D" id="3.30.1180.10">
    <property type="match status" value="1"/>
</dbReference>
<dbReference type="Gene3D" id="2.20.28.50">
    <property type="entry name" value="degv family protein"/>
    <property type="match status" value="1"/>
</dbReference>
<dbReference type="Gene3D" id="3.40.50.10440">
    <property type="entry name" value="Dihydroxyacetone kinase, domain 1"/>
    <property type="match status" value="1"/>
</dbReference>
<dbReference type="InterPro" id="IPR003797">
    <property type="entry name" value="DegV"/>
</dbReference>
<dbReference type="InterPro" id="IPR043168">
    <property type="entry name" value="DegV_C"/>
</dbReference>
<dbReference type="InterPro" id="IPR050270">
    <property type="entry name" value="DegV_domain_contain"/>
</dbReference>
<dbReference type="NCBIfam" id="TIGR00762">
    <property type="entry name" value="DegV"/>
    <property type="match status" value="1"/>
</dbReference>
<dbReference type="PANTHER" id="PTHR33434">
    <property type="entry name" value="DEGV DOMAIN-CONTAINING PROTEIN DR_1986-RELATED"/>
    <property type="match status" value="1"/>
</dbReference>
<dbReference type="PANTHER" id="PTHR33434:SF2">
    <property type="entry name" value="FATTY ACID-BINDING PROTEIN TM_1468"/>
    <property type="match status" value="1"/>
</dbReference>
<dbReference type="Pfam" id="PF02645">
    <property type="entry name" value="DegV"/>
    <property type="match status" value="1"/>
</dbReference>
<dbReference type="SUPFAM" id="SSF82549">
    <property type="entry name" value="DAK1/DegV-like"/>
    <property type="match status" value="1"/>
</dbReference>
<dbReference type="PROSITE" id="PS51482">
    <property type="entry name" value="DEGV"/>
    <property type="match status" value="1"/>
</dbReference>
<proteinExistence type="inferred from homology"/>
<protein>
    <recommendedName>
        <fullName>DegV domain-containing protein YteA</fullName>
    </recommendedName>
</protein>
<feature type="chain" id="PRO_0000209767" description="DegV domain-containing protein YteA">
    <location>
        <begin position="1"/>
        <end position="289"/>
    </location>
</feature>
<feature type="domain" description="DegV" evidence="3">
    <location>
        <begin position="3"/>
        <end position="284"/>
    </location>
</feature>
<feature type="binding site" evidence="2">
    <location>
        <position position="62"/>
    </location>
    <ligand>
        <name>hexadecanoate</name>
        <dbReference type="ChEBI" id="CHEBI:7896"/>
    </ligand>
</feature>
<feature type="binding site" evidence="2">
    <location>
        <position position="94"/>
    </location>
    <ligand>
        <name>hexadecanoate</name>
        <dbReference type="ChEBI" id="CHEBI:7896"/>
    </ligand>
</feature>
<name>YTEA_LACLA</name>
<sequence length="289" mass="31582">MTFQIMTDSTADLSPYYIKKHHLTVLGMTVTVGEETYETIGEAALDNSTLLAAIKKGATVHTSQINSGQFLEVFKKFASADEELLYLAFSSGLSGTYQSALIAQDMVLEEFPSAKITVVDTLAAASGEGFLVEETVKLRDSGKSLTETLEVLSDIIPRLQSRFMVDDLNHLARGGRIPKAVALVGTMANIKPLLDVDPEGRLRQVTKVRGKKKAINQLLEKSLEEMDTAYPRLLISYSGTDEIAQEIKKQAMQKKGISDVDVRPLSPTIVTHTGDGTIAIFSISRKSRE</sequence>
<accession>Q9CEH0</accession>
<organism>
    <name type="scientific">Lactococcus lactis subsp. lactis (strain IL1403)</name>
    <name type="common">Streptococcus lactis</name>
    <dbReference type="NCBI Taxonomy" id="272623"/>
    <lineage>
        <taxon>Bacteria</taxon>
        <taxon>Bacillati</taxon>
        <taxon>Bacillota</taxon>
        <taxon>Bacilli</taxon>
        <taxon>Lactobacillales</taxon>
        <taxon>Streptococcaceae</taxon>
        <taxon>Lactococcus</taxon>
    </lineage>
</organism>
<reference key="1">
    <citation type="journal article" date="2001" name="Genome Res.">
        <title>The complete genome sequence of the lactic acid bacterium Lactococcus lactis ssp. lactis IL1403.</title>
        <authorList>
            <person name="Bolotin A."/>
            <person name="Wincker P."/>
            <person name="Mauger S."/>
            <person name="Jaillon O."/>
            <person name="Malarme K."/>
            <person name="Weissenbach J."/>
            <person name="Ehrlich S.D."/>
            <person name="Sorokin A."/>
        </authorList>
    </citation>
    <scope>NUCLEOTIDE SEQUENCE [LARGE SCALE GENOMIC DNA]</scope>
    <source>
        <strain>IL1403</strain>
    </source>
</reference>
<gene>
    <name type="primary">yteA</name>
    <name type="ordered locus">LL1871</name>
    <name type="ORF">L123851</name>
</gene>